<accession>Q8ZPM1</accession>
<organism>
    <name type="scientific">Salmonella typhimurium (strain LT2 / SGSC1412 / ATCC 700720)</name>
    <dbReference type="NCBI Taxonomy" id="99287"/>
    <lineage>
        <taxon>Bacteria</taxon>
        <taxon>Pseudomonadati</taxon>
        <taxon>Pseudomonadota</taxon>
        <taxon>Gammaproteobacteria</taxon>
        <taxon>Enterobacterales</taxon>
        <taxon>Enterobacteriaceae</taxon>
        <taxon>Salmonella</taxon>
    </lineage>
</organism>
<proteinExistence type="inferred from homology"/>
<protein>
    <recommendedName>
        <fullName evidence="1">Ion-translocating oxidoreductase complex subunit B</fullName>
        <ecNumber evidence="1">7.-.-.-</ecNumber>
    </recommendedName>
    <alternativeName>
        <fullName evidence="1">Rsx electron transport complex subunit B</fullName>
    </alternativeName>
</protein>
<comment type="function">
    <text evidence="1">Part of a membrane-bound complex that couples electron transfer with translocation of ions across the membrane. Required to maintain the reduced state of SoxR.</text>
</comment>
<comment type="cofactor">
    <cofactor evidence="1">
        <name>[4Fe-4S] cluster</name>
        <dbReference type="ChEBI" id="CHEBI:49883"/>
    </cofactor>
    <text evidence="1">Binds 3 [4Fe-4S] clusters.</text>
</comment>
<comment type="subunit">
    <text evidence="1">The complex is composed of six subunits: RsxA, RsxB, RsxC, RsxD, RsxE and RsxG.</text>
</comment>
<comment type="subcellular location">
    <subcellularLocation>
        <location evidence="1">Cell inner membrane</location>
    </subcellularLocation>
</comment>
<comment type="similarity">
    <text evidence="1">Belongs to the 4Fe4S bacterial-type ferredoxin family. RnfB subfamily.</text>
</comment>
<gene>
    <name evidence="1" type="primary">rsxB</name>
    <name type="ordered locus">STM1458</name>
</gene>
<feature type="chain" id="PRO_0000216279" description="Ion-translocating oxidoreductase complex subunit B">
    <location>
        <begin position="1"/>
        <end position="192"/>
    </location>
</feature>
<feature type="domain" description="4Fe-4S" evidence="1">
    <location>
        <begin position="32"/>
        <end position="91"/>
    </location>
</feature>
<feature type="domain" description="4Fe-4S ferredoxin-type 1" evidence="1">
    <location>
        <begin position="108"/>
        <end position="137"/>
    </location>
</feature>
<feature type="domain" description="4Fe-4S ferredoxin-type 2" evidence="1">
    <location>
        <begin position="138"/>
        <end position="167"/>
    </location>
</feature>
<feature type="region of interest" description="Hydrophobic" evidence="1">
    <location>
        <begin position="1"/>
        <end position="26"/>
    </location>
</feature>
<feature type="binding site" evidence="1">
    <location>
        <position position="49"/>
    </location>
    <ligand>
        <name>[4Fe-4S] cluster</name>
        <dbReference type="ChEBI" id="CHEBI:49883"/>
        <label>1</label>
    </ligand>
</feature>
<feature type="binding site" evidence="1">
    <location>
        <position position="52"/>
    </location>
    <ligand>
        <name>[4Fe-4S] cluster</name>
        <dbReference type="ChEBI" id="CHEBI:49883"/>
        <label>1</label>
    </ligand>
</feature>
<feature type="binding site" evidence="1">
    <location>
        <position position="57"/>
    </location>
    <ligand>
        <name>[4Fe-4S] cluster</name>
        <dbReference type="ChEBI" id="CHEBI:49883"/>
        <label>1</label>
    </ligand>
</feature>
<feature type="binding site" evidence="1">
    <location>
        <position position="74"/>
    </location>
    <ligand>
        <name>[4Fe-4S] cluster</name>
        <dbReference type="ChEBI" id="CHEBI:49883"/>
        <label>1</label>
    </ligand>
</feature>
<feature type="binding site" evidence="1">
    <location>
        <position position="117"/>
    </location>
    <ligand>
        <name>[4Fe-4S] cluster</name>
        <dbReference type="ChEBI" id="CHEBI:49883"/>
        <label>2</label>
    </ligand>
</feature>
<feature type="binding site" evidence="1">
    <location>
        <position position="120"/>
    </location>
    <ligand>
        <name>[4Fe-4S] cluster</name>
        <dbReference type="ChEBI" id="CHEBI:49883"/>
        <label>2</label>
    </ligand>
</feature>
<feature type="binding site" evidence="1">
    <location>
        <position position="123"/>
    </location>
    <ligand>
        <name>[4Fe-4S] cluster</name>
        <dbReference type="ChEBI" id="CHEBI:49883"/>
        <label>2</label>
    </ligand>
</feature>
<feature type="binding site" evidence="1">
    <location>
        <position position="127"/>
    </location>
    <ligand>
        <name>[4Fe-4S] cluster</name>
        <dbReference type="ChEBI" id="CHEBI:49883"/>
        <label>3</label>
    </ligand>
</feature>
<feature type="binding site" evidence="1">
    <location>
        <position position="147"/>
    </location>
    <ligand>
        <name>[4Fe-4S] cluster</name>
        <dbReference type="ChEBI" id="CHEBI:49883"/>
        <label>3</label>
    </ligand>
</feature>
<feature type="binding site" evidence="1">
    <location>
        <position position="150"/>
    </location>
    <ligand>
        <name>[4Fe-4S] cluster</name>
        <dbReference type="ChEBI" id="CHEBI:49883"/>
        <label>3</label>
    </ligand>
</feature>
<feature type="binding site" evidence="1">
    <location>
        <position position="153"/>
    </location>
    <ligand>
        <name>[4Fe-4S] cluster</name>
        <dbReference type="ChEBI" id="CHEBI:49883"/>
        <label>3</label>
    </ligand>
</feature>
<feature type="binding site" evidence="1">
    <location>
        <position position="157"/>
    </location>
    <ligand>
        <name>[4Fe-4S] cluster</name>
        <dbReference type="ChEBI" id="CHEBI:49883"/>
        <label>2</label>
    </ligand>
</feature>
<dbReference type="EC" id="7.-.-.-" evidence="1"/>
<dbReference type="EMBL" id="AE006468">
    <property type="protein sequence ID" value="AAL20380.1"/>
    <property type="molecule type" value="Genomic_DNA"/>
</dbReference>
<dbReference type="RefSeq" id="WP_001092597.1">
    <property type="nucleotide sequence ID" value="NC_003197.2"/>
</dbReference>
<dbReference type="SMR" id="Q8ZPM1"/>
<dbReference type="STRING" id="99287.STM1458"/>
<dbReference type="PaxDb" id="99287-STM1458"/>
<dbReference type="KEGG" id="stm:STM1458"/>
<dbReference type="PATRIC" id="fig|99287.12.peg.1541"/>
<dbReference type="HOGENOM" id="CLU_063448_2_0_6"/>
<dbReference type="OMA" id="ITKCVPG"/>
<dbReference type="PhylomeDB" id="Q8ZPM1"/>
<dbReference type="BioCyc" id="SENT99287:STM1458-MONOMER"/>
<dbReference type="Proteomes" id="UP000001014">
    <property type="component" value="Chromosome"/>
</dbReference>
<dbReference type="GO" id="GO:0005886">
    <property type="term" value="C:plasma membrane"/>
    <property type="evidence" value="ECO:0007669"/>
    <property type="project" value="UniProtKB-SubCell"/>
</dbReference>
<dbReference type="GO" id="GO:0051539">
    <property type="term" value="F:4 iron, 4 sulfur cluster binding"/>
    <property type="evidence" value="ECO:0007669"/>
    <property type="project" value="UniProtKB-UniRule"/>
</dbReference>
<dbReference type="GO" id="GO:0009055">
    <property type="term" value="F:electron transfer activity"/>
    <property type="evidence" value="ECO:0007669"/>
    <property type="project" value="InterPro"/>
</dbReference>
<dbReference type="GO" id="GO:0046872">
    <property type="term" value="F:metal ion binding"/>
    <property type="evidence" value="ECO:0007669"/>
    <property type="project" value="UniProtKB-KW"/>
</dbReference>
<dbReference type="GO" id="GO:0022900">
    <property type="term" value="P:electron transport chain"/>
    <property type="evidence" value="ECO:0007669"/>
    <property type="project" value="UniProtKB-UniRule"/>
</dbReference>
<dbReference type="FunFam" id="1.10.15.40:FF:000001">
    <property type="entry name" value="Ion-translocating oxidoreductase complex subunit B"/>
    <property type="match status" value="1"/>
</dbReference>
<dbReference type="Gene3D" id="3.30.70.20">
    <property type="match status" value="1"/>
</dbReference>
<dbReference type="Gene3D" id="1.10.15.40">
    <property type="entry name" value="Electron transport complex subunit B, putative Fe-S cluster"/>
    <property type="match status" value="1"/>
</dbReference>
<dbReference type="HAMAP" id="MF_00463">
    <property type="entry name" value="RsxB_RnfB"/>
    <property type="match status" value="1"/>
</dbReference>
<dbReference type="InterPro" id="IPR007202">
    <property type="entry name" value="4Fe-4S_dom"/>
</dbReference>
<dbReference type="InterPro" id="IPR017896">
    <property type="entry name" value="4Fe4S_Fe-S-bd"/>
</dbReference>
<dbReference type="InterPro" id="IPR017900">
    <property type="entry name" value="4Fe4S_Fe_S_CS"/>
</dbReference>
<dbReference type="InterPro" id="IPR050395">
    <property type="entry name" value="4Fe4S_Ferredoxin_RnfB"/>
</dbReference>
<dbReference type="InterPro" id="IPR010207">
    <property type="entry name" value="Elect_transpt_cplx_RnfB/RsxB"/>
</dbReference>
<dbReference type="InterPro" id="IPR016463">
    <property type="entry name" value="RnfB/RsxB_Proteobac"/>
</dbReference>
<dbReference type="NCBIfam" id="NF003475">
    <property type="entry name" value="PRK05113.1"/>
    <property type="match status" value="1"/>
</dbReference>
<dbReference type="NCBIfam" id="TIGR01944">
    <property type="entry name" value="rnfB"/>
    <property type="match status" value="1"/>
</dbReference>
<dbReference type="PANTHER" id="PTHR43560">
    <property type="entry name" value="ION-TRANSLOCATING OXIDOREDUCTASE COMPLEX SUBUNIT B"/>
    <property type="match status" value="1"/>
</dbReference>
<dbReference type="PANTHER" id="PTHR43560:SF1">
    <property type="entry name" value="ION-TRANSLOCATING OXIDOREDUCTASE COMPLEX SUBUNIT B"/>
    <property type="match status" value="1"/>
</dbReference>
<dbReference type="Pfam" id="PF14697">
    <property type="entry name" value="Fer4_21"/>
    <property type="match status" value="1"/>
</dbReference>
<dbReference type="Pfam" id="PF04060">
    <property type="entry name" value="FeS"/>
    <property type="match status" value="1"/>
</dbReference>
<dbReference type="PIRSF" id="PIRSF005784">
    <property type="entry name" value="Elect_transpt_RnfB"/>
    <property type="match status" value="1"/>
</dbReference>
<dbReference type="SUPFAM" id="SSF54862">
    <property type="entry name" value="4Fe-4S ferredoxins"/>
    <property type="match status" value="1"/>
</dbReference>
<dbReference type="PROSITE" id="PS51656">
    <property type="entry name" value="4FE4S"/>
    <property type="match status" value="1"/>
</dbReference>
<dbReference type="PROSITE" id="PS00198">
    <property type="entry name" value="4FE4S_FER_1"/>
    <property type="match status" value="2"/>
</dbReference>
<dbReference type="PROSITE" id="PS51379">
    <property type="entry name" value="4FE4S_FER_2"/>
    <property type="match status" value="2"/>
</dbReference>
<name>RSXB_SALTY</name>
<keyword id="KW-0004">4Fe-4S</keyword>
<keyword id="KW-0997">Cell inner membrane</keyword>
<keyword id="KW-1003">Cell membrane</keyword>
<keyword id="KW-0249">Electron transport</keyword>
<keyword id="KW-0408">Iron</keyword>
<keyword id="KW-0411">Iron-sulfur</keyword>
<keyword id="KW-0472">Membrane</keyword>
<keyword id="KW-0479">Metal-binding</keyword>
<keyword id="KW-1185">Reference proteome</keyword>
<keyword id="KW-0677">Repeat</keyword>
<keyword id="KW-1278">Translocase</keyword>
<keyword id="KW-0813">Transport</keyword>
<reference key="1">
    <citation type="journal article" date="2001" name="Nature">
        <title>Complete genome sequence of Salmonella enterica serovar Typhimurium LT2.</title>
        <authorList>
            <person name="McClelland M."/>
            <person name="Sanderson K.E."/>
            <person name="Spieth J."/>
            <person name="Clifton S.W."/>
            <person name="Latreille P."/>
            <person name="Courtney L."/>
            <person name="Porwollik S."/>
            <person name="Ali J."/>
            <person name="Dante M."/>
            <person name="Du F."/>
            <person name="Hou S."/>
            <person name="Layman D."/>
            <person name="Leonard S."/>
            <person name="Nguyen C."/>
            <person name="Scott K."/>
            <person name="Holmes A."/>
            <person name="Grewal N."/>
            <person name="Mulvaney E."/>
            <person name="Ryan E."/>
            <person name="Sun H."/>
            <person name="Florea L."/>
            <person name="Miller W."/>
            <person name="Stoneking T."/>
            <person name="Nhan M."/>
            <person name="Waterston R."/>
            <person name="Wilson R.K."/>
        </authorList>
    </citation>
    <scope>NUCLEOTIDE SEQUENCE [LARGE SCALE GENOMIC DNA]</scope>
    <source>
        <strain>LT2 / SGSC1412 / ATCC 700720</strain>
    </source>
</reference>
<evidence type="ECO:0000255" key="1">
    <source>
        <dbReference type="HAMAP-Rule" id="MF_00463"/>
    </source>
</evidence>
<sequence>MNTIWIAVGALTLLGLVFGAILGYASRRFAVEDDPVVEKIDAILPQSQCGQCGYPGCRPYAEAVGLQGEKINRCAPGGEAVMLKIAELLNVEPQPCDGEEQQAAPVRMLAVIDENNCIGCTKCIQACPVDAIVGATRAMHTVMSDLCTGCNLCVDPCPTHCIELRPVNETPDSWKWDLNTIPVRIIPVEQHA</sequence>